<accession>A4K9Z8</accession>
<feature type="initiator methionine" description="Removed" evidence="1">
    <location>
        <position position="1"/>
    </location>
</feature>
<feature type="chain" id="PRO_0000424962" description="Profilin-2">
    <location>
        <begin position="2"/>
        <end position="133"/>
    </location>
</feature>
<feature type="short sequence motif" description="Involved in PIP2 interaction">
    <location>
        <begin position="83"/>
        <end position="99"/>
    </location>
</feature>
<feature type="modified residue" description="Phosphothreonine" evidence="1">
    <location>
        <position position="113"/>
    </location>
</feature>
<feature type="disulfide bond" evidence="3 5 6">
    <location>
        <begin position="13"/>
        <end position="117"/>
    </location>
</feature>
<feature type="helix" evidence="7">
    <location>
        <begin position="3"/>
        <end position="10"/>
    </location>
</feature>
<feature type="helix" evidence="7">
    <location>
        <begin position="16"/>
        <end position="19"/>
    </location>
</feature>
<feature type="strand" evidence="7">
    <location>
        <begin position="23"/>
        <end position="29"/>
    </location>
</feature>
<feature type="strand" evidence="7">
    <location>
        <begin position="34"/>
        <end position="37"/>
    </location>
</feature>
<feature type="helix" evidence="7">
    <location>
        <begin position="46"/>
        <end position="57"/>
    </location>
</feature>
<feature type="turn" evidence="7">
    <location>
        <begin position="59"/>
        <end position="65"/>
    </location>
</feature>
<feature type="strand" evidence="7">
    <location>
        <begin position="67"/>
        <end position="69"/>
    </location>
</feature>
<feature type="strand" evidence="7">
    <location>
        <begin position="72"/>
        <end position="80"/>
    </location>
</feature>
<feature type="turn" evidence="7">
    <location>
        <begin position="81"/>
        <end position="83"/>
    </location>
</feature>
<feature type="strand" evidence="7">
    <location>
        <begin position="84"/>
        <end position="89"/>
    </location>
</feature>
<feature type="strand" evidence="7">
    <location>
        <begin position="92"/>
        <end position="98"/>
    </location>
</feature>
<feature type="strand" evidence="7">
    <location>
        <begin position="100"/>
        <end position="108"/>
    </location>
</feature>
<feature type="helix" evidence="7">
    <location>
        <begin position="114"/>
        <end position="130"/>
    </location>
</feature>
<protein>
    <recommendedName>
        <fullName>Profilin-2</fullName>
    </recommendedName>
    <alternativeName>
        <fullName>Allergen Bet v II</fullName>
    </alternativeName>
    <alternativeName>
        <fullName>Pollen allergen Bet v 2</fullName>
    </alternativeName>
    <allergenName>Bet v 2</allergenName>
</protein>
<sequence length="133" mass="14278">MSWQTYVDEHLMCDIDGQGQQLAASAIVGHDGSVWAQSSSFPQFKPQEITGIMKDFEEPGHLAPTGLHLGGIKYMVIQGEAGAVIRGKKGSGGITIKKTGQALVFGIYEEPVTPGQCNMVVERLGDYLIDQGL</sequence>
<evidence type="ECO:0000250" key="1"/>
<evidence type="ECO:0000269" key="2">
    <source>
    </source>
</evidence>
<evidence type="ECO:0000269" key="3">
    <source>
    </source>
</evidence>
<evidence type="ECO:0000305" key="4"/>
<evidence type="ECO:0000305" key="5">
    <source>
    </source>
</evidence>
<evidence type="ECO:0007744" key="6">
    <source>
        <dbReference type="PDB" id="5NZB"/>
    </source>
</evidence>
<evidence type="ECO:0007829" key="7">
    <source>
        <dbReference type="PDB" id="5NZB"/>
    </source>
</evidence>
<name>PROF2_BETPN</name>
<organism>
    <name type="scientific">Betula pendula</name>
    <name type="common">European white birch</name>
    <name type="synonym">Betula verrucosa</name>
    <dbReference type="NCBI Taxonomy" id="3505"/>
    <lineage>
        <taxon>Eukaryota</taxon>
        <taxon>Viridiplantae</taxon>
        <taxon>Streptophyta</taxon>
        <taxon>Embryophyta</taxon>
        <taxon>Tracheophyta</taxon>
        <taxon>Spermatophyta</taxon>
        <taxon>Magnoliopsida</taxon>
        <taxon>eudicotyledons</taxon>
        <taxon>Gunneridae</taxon>
        <taxon>Pentapetalae</taxon>
        <taxon>rosids</taxon>
        <taxon>fabids</taxon>
        <taxon>Fagales</taxon>
        <taxon>Betulaceae</taxon>
        <taxon>Betula</taxon>
    </lineage>
</organism>
<proteinExistence type="evidence at protein level"/>
<keyword id="KW-0002">3D-structure</keyword>
<keyword id="KW-0009">Actin-binding</keyword>
<keyword id="KW-0020">Allergen</keyword>
<keyword id="KW-0963">Cytoplasm</keyword>
<keyword id="KW-0206">Cytoskeleton</keyword>
<keyword id="KW-1015">Disulfide bond</keyword>
<keyword id="KW-0597">Phosphoprotein</keyword>
<dbReference type="EMBL" id="DQ650633">
    <property type="protein sequence ID" value="ABG48509.1"/>
    <property type="molecule type" value="mRNA"/>
</dbReference>
<dbReference type="PDB" id="5NZB">
    <property type="method" value="X-ray"/>
    <property type="resolution" value="1.70 A"/>
    <property type="chains" value="A=2-133"/>
</dbReference>
<dbReference type="PDB" id="5NZC">
    <property type="method" value="X-ray"/>
    <property type="resolution" value="2.00 A"/>
    <property type="chains" value="A/B=2-133"/>
</dbReference>
<dbReference type="PDBsum" id="5NZB"/>
<dbReference type="PDBsum" id="5NZC"/>
<dbReference type="SMR" id="A4K9Z8"/>
<dbReference type="Allergome" id="127">
    <property type="allergen name" value="Bet v 2"/>
</dbReference>
<dbReference type="GO" id="GO:0005938">
    <property type="term" value="C:cell cortex"/>
    <property type="evidence" value="ECO:0007669"/>
    <property type="project" value="TreeGrafter"/>
</dbReference>
<dbReference type="GO" id="GO:0005856">
    <property type="term" value="C:cytoskeleton"/>
    <property type="evidence" value="ECO:0007669"/>
    <property type="project" value="UniProtKB-SubCell"/>
</dbReference>
<dbReference type="GO" id="GO:0003785">
    <property type="term" value="F:actin monomer binding"/>
    <property type="evidence" value="ECO:0007669"/>
    <property type="project" value="TreeGrafter"/>
</dbReference>
<dbReference type="CDD" id="cd00148">
    <property type="entry name" value="PROF"/>
    <property type="match status" value="1"/>
</dbReference>
<dbReference type="FunFam" id="3.30.450.30:FF:000001">
    <property type="entry name" value="Profilin"/>
    <property type="match status" value="1"/>
</dbReference>
<dbReference type="Gene3D" id="3.30.450.30">
    <property type="entry name" value="Dynein light chain 2a, cytoplasmic"/>
    <property type="match status" value="1"/>
</dbReference>
<dbReference type="InterPro" id="IPR048278">
    <property type="entry name" value="PFN"/>
</dbReference>
<dbReference type="InterPro" id="IPR005455">
    <property type="entry name" value="PFN_euk"/>
</dbReference>
<dbReference type="InterPro" id="IPR036140">
    <property type="entry name" value="PFN_sf"/>
</dbReference>
<dbReference type="InterPro" id="IPR027310">
    <property type="entry name" value="Profilin_CS"/>
</dbReference>
<dbReference type="PANTHER" id="PTHR11604">
    <property type="entry name" value="PROFILIN"/>
    <property type="match status" value="1"/>
</dbReference>
<dbReference type="PANTHER" id="PTHR11604:SF25">
    <property type="entry name" value="PROFILIN-5"/>
    <property type="match status" value="1"/>
</dbReference>
<dbReference type="Pfam" id="PF00235">
    <property type="entry name" value="Profilin"/>
    <property type="match status" value="1"/>
</dbReference>
<dbReference type="PRINTS" id="PR00392">
    <property type="entry name" value="PROFILIN"/>
</dbReference>
<dbReference type="PRINTS" id="PR01640">
    <property type="entry name" value="PROFILINPLNT"/>
</dbReference>
<dbReference type="SMART" id="SM00392">
    <property type="entry name" value="PROF"/>
    <property type="match status" value="1"/>
</dbReference>
<dbReference type="SUPFAM" id="SSF55770">
    <property type="entry name" value="Profilin (actin-binding protein)"/>
    <property type="match status" value="1"/>
</dbReference>
<dbReference type="PROSITE" id="PS00414">
    <property type="entry name" value="PROFILIN"/>
    <property type="match status" value="1"/>
</dbReference>
<reference key="1">
    <citation type="journal article" date="2012" name="PLoS ONE">
        <title>Characterization of profilin polymorphism in pollen with a focus on multifunctionality.</title>
        <authorList>
            <person name="Jimenez-Lopez J.C."/>
            <person name="Morales S."/>
            <person name="Castro A.J."/>
            <person name="Volkmann D."/>
            <person name="Rodriguez-Garcia M.I."/>
            <person name="Alche Jde D."/>
        </authorList>
    </citation>
    <scope>NUCLEOTIDE SEQUENCE [MRNA]</scope>
    <scope>POLYMORPHISM</scope>
    <source>
        <strain>cv. Laciniata</strain>
    </source>
</reference>
<reference key="2">
    <citation type="journal article" date="2013" name="PLoS ONE">
        <title>Analysis of the effects of polymorphism on pollen profilin structural functionality and the generation of conformational, T- and B-cell epitopes.</title>
        <authorList>
            <person name="Jimenez-Lopez J.C."/>
            <person name="Rodriguez-Garcia M.I."/>
            <person name="Alche J.D."/>
        </authorList>
    </citation>
    <scope>3D-STRUCTURE MODELING</scope>
    <scope>DISULFIDE BOND</scope>
</reference>
<reference key="3">
    <citation type="journal article" date="2017" name="Int. J. Mol. Sci.">
        <title>Two distinct conformations in Bet v 2 determine its proteolytic resistance to cathepsin S.</title>
        <authorList>
            <person name="Soh W.T."/>
            <person name="Briza P."/>
            <person name="Dall E."/>
            <person name="Asam C."/>
            <person name="Schubert M."/>
            <person name="Huber S."/>
            <person name="Aglas L."/>
            <person name="Bohle B."/>
            <person name="Ferreira F."/>
            <person name="Brandstetter H."/>
        </authorList>
    </citation>
    <scope>X-RAY CRYSTALLOGRAPHY (1.70 ANGSTROMS) OF 2-133</scope>
    <scope>DISULFIDE BOND</scope>
</reference>
<comment type="function">
    <text evidence="1">Binds to actin and affects the structure of the cytoskeleton. At high concentrations, profilin prevents the polymerization of actin, whereas it enhances it at low concentrations (By similarity).</text>
</comment>
<comment type="subunit">
    <text evidence="1">Occurs in many kinds of cells as a complex with monomeric actin in a 1:1 ratio.</text>
</comment>
<comment type="subcellular location">
    <subcellularLocation>
        <location evidence="1">Cytoplasm</location>
        <location evidence="1">Cytoskeleton</location>
    </subcellularLocation>
</comment>
<comment type="PTM">
    <text evidence="1">Phosphorylated by MAP kinases.</text>
</comment>
<comment type="polymorphism">
    <text evidence="2">Several isoforms of the allergen exist due to polymorphism.</text>
</comment>
<comment type="allergen">
    <text>Causes an allergic reaction in human.</text>
</comment>
<comment type="miscellaneous">
    <text evidence="5">The variability of the residues taking part of IgE-binding epitopes might be responsible of the difference in cross-reactivity among olive pollen cultivars, and between distantly related pollen species, leading to a variable range of allergy reactions among atopic patients.</text>
</comment>
<comment type="similarity">
    <text evidence="4">Belongs to the profilin family.</text>
</comment>